<proteinExistence type="evidence at protein level"/>
<accession>Q13769</accession>
<accession>O60839</accession>
<accession>Q9UPZ5</accession>
<protein>
    <recommendedName>
        <fullName evidence="23">THO complex subunit 5</fullName>
    </recommendedName>
    <alternativeName>
        <fullName>Functional spliceosome-associated protein 79</fullName>
        <shortName>fSAP79</shortName>
    </alternativeName>
    <alternativeName>
        <fullName>NF2/meningioma region protein pK1.3</fullName>
    </alternativeName>
    <alternativeName>
        <fullName>Placental protein 39.2</fullName>
        <shortName>PP39.2</shortName>
    </alternativeName>
    <alternativeName>
        <fullName>hTREX90</fullName>
    </alternativeName>
</protein>
<dbReference type="EMBL" id="L18972">
    <property type="protein sequence ID" value="AAC26837.1"/>
    <property type="molecule type" value="Genomic_DNA"/>
</dbReference>
<dbReference type="EMBL" id="AB023200">
    <property type="protein sequence ID" value="BAA76827.2"/>
    <property type="status" value="ALT_INIT"/>
    <property type="molecule type" value="mRNA"/>
</dbReference>
<dbReference type="EMBL" id="CR456542">
    <property type="protein sequence ID" value="CAG30428.1"/>
    <property type="molecule type" value="mRNA"/>
</dbReference>
<dbReference type="EMBL" id="AC005529">
    <property type="status" value="NOT_ANNOTATED_CDS"/>
    <property type="molecule type" value="Genomic_DNA"/>
</dbReference>
<dbReference type="EMBL" id="BC003615">
    <property type="protein sequence ID" value="AAH03615.1"/>
    <property type="molecule type" value="mRNA"/>
</dbReference>
<dbReference type="EMBL" id="AJ006069">
    <property type="protein sequence ID" value="CAA06841.1"/>
    <property type="molecule type" value="mRNA"/>
</dbReference>
<dbReference type="CCDS" id="CCDS13859.1"/>
<dbReference type="PIR" id="I39463">
    <property type="entry name" value="I39463"/>
</dbReference>
<dbReference type="RefSeq" id="NP_001002877.1">
    <property type="nucleotide sequence ID" value="NM_001002877.2"/>
</dbReference>
<dbReference type="RefSeq" id="NP_001002878.1">
    <property type="nucleotide sequence ID" value="NM_001002878.1"/>
</dbReference>
<dbReference type="RefSeq" id="NP_001002879.1">
    <property type="nucleotide sequence ID" value="NM_001002879.1"/>
</dbReference>
<dbReference type="RefSeq" id="NP_003669.4">
    <property type="nucleotide sequence ID" value="NM_003678.4"/>
</dbReference>
<dbReference type="RefSeq" id="XP_047297515.1">
    <property type="nucleotide sequence ID" value="XM_047441559.1"/>
</dbReference>
<dbReference type="RefSeq" id="XP_054182050.1">
    <property type="nucleotide sequence ID" value="XM_054326075.1"/>
</dbReference>
<dbReference type="PDB" id="7APK">
    <property type="method" value="EM"/>
    <property type="resolution" value="3.30 A"/>
    <property type="chains" value="E/M/e/m=1-683"/>
</dbReference>
<dbReference type="PDB" id="7ZNK">
    <property type="method" value="EM"/>
    <property type="resolution" value="3.90 A"/>
    <property type="chains" value="E/M/e/m=1-683"/>
</dbReference>
<dbReference type="PDB" id="7ZNL">
    <property type="method" value="EM"/>
    <property type="resolution" value="3.45 A"/>
    <property type="chains" value="E/M/e/m=1-683"/>
</dbReference>
<dbReference type="PDBsum" id="7APK"/>
<dbReference type="PDBsum" id="7ZNK"/>
<dbReference type="PDBsum" id="7ZNL"/>
<dbReference type="EMDB" id="EMD-11857"/>
<dbReference type="EMDB" id="EMD-14804"/>
<dbReference type="EMDB" id="EMD-14808"/>
<dbReference type="SMR" id="Q13769"/>
<dbReference type="BioGRID" id="114132">
    <property type="interactions" value="150"/>
</dbReference>
<dbReference type="ComplexPortal" id="CPX-2488">
    <property type="entry name" value="TREX transcription-export complex, DX39B variant"/>
</dbReference>
<dbReference type="ComplexPortal" id="CPX-7261">
    <property type="entry name" value="TREX transcription-export complex, DX39A variant"/>
</dbReference>
<dbReference type="CORUM" id="Q13769"/>
<dbReference type="FunCoup" id="Q13769">
    <property type="interactions" value="2843"/>
</dbReference>
<dbReference type="IntAct" id="Q13769">
    <property type="interactions" value="77"/>
</dbReference>
<dbReference type="MINT" id="Q13769"/>
<dbReference type="STRING" id="9606.ENSP00000420306"/>
<dbReference type="TCDB" id="3.A.22.1.2">
    <property type="family name" value="the transcription-coupled trex/tap nuclear mrna export complex (trex) family"/>
</dbReference>
<dbReference type="GlyGen" id="Q13769">
    <property type="glycosylation" value="5 sites, 1 O-linked glycan (5 sites)"/>
</dbReference>
<dbReference type="iPTMnet" id="Q13769"/>
<dbReference type="MetOSite" id="Q13769"/>
<dbReference type="PhosphoSitePlus" id="Q13769"/>
<dbReference type="SwissPalm" id="Q13769"/>
<dbReference type="BioMuta" id="THOC5"/>
<dbReference type="DMDM" id="259016156"/>
<dbReference type="jPOST" id="Q13769"/>
<dbReference type="MassIVE" id="Q13769"/>
<dbReference type="PaxDb" id="9606-ENSP00000420306"/>
<dbReference type="PeptideAtlas" id="Q13769"/>
<dbReference type="ProteomicsDB" id="59680"/>
<dbReference type="Pumba" id="Q13769"/>
<dbReference type="Antibodypedia" id="24518">
    <property type="antibodies" value="212 antibodies from 34 providers"/>
</dbReference>
<dbReference type="DNASU" id="8563"/>
<dbReference type="Ensembl" id="ENST00000397871.5">
    <property type="protein sequence ID" value="ENSP00000380969.1"/>
    <property type="gene ID" value="ENSG00000100296.14"/>
</dbReference>
<dbReference type="Ensembl" id="ENST00000397872.5">
    <property type="protein sequence ID" value="ENSP00000380970.1"/>
    <property type="gene ID" value="ENSG00000100296.14"/>
</dbReference>
<dbReference type="Ensembl" id="ENST00000397873.6">
    <property type="protein sequence ID" value="ENSP00000380971.2"/>
    <property type="gene ID" value="ENSG00000100296.14"/>
</dbReference>
<dbReference type="Ensembl" id="ENST00000490103.6">
    <property type="protein sequence ID" value="ENSP00000420306.1"/>
    <property type="gene ID" value="ENSG00000100296.14"/>
</dbReference>
<dbReference type="GeneID" id="8563"/>
<dbReference type="KEGG" id="hsa:8563"/>
<dbReference type="MANE-Select" id="ENST00000490103.6">
    <property type="protein sequence ID" value="ENSP00000420306.1"/>
    <property type="RefSeq nucleotide sequence ID" value="NM_003678.5"/>
    <property type="RefSeq protein sequence ID" value="NP_003669.4"/>
</dbReference>
<dbReference type="UCSC" id="uc003afr.4">
    <property type="organism name" value="human"/>
</dbReference>
<dbReference type="AGR" id="HGNC:19074"/>
<dbReference type="CTD" id="8563"/>
<dbReference type="DisGeNET" id="8563"/>
<dbReference type="GeneCards" id="THOC5"/>
<dbReference type="HGNC" id="HGNC:19074">
    <property type="gene designation" value="THOC5"/>
</dbReference>
<dbReference type="HPA" id="ENSG00000100296">
    <property type="expression patterns" value="Low tissue specificity"/>
</dbReference>
<dbReference type="MIM" id="612733">
    <property type="type" value="gene"/>
</dbReference>
<dbReference type="neXtProt" id="NX_Q13769"/>
<dbReference type="OpenTargets" id="ENSG00000100296"/>
<dbReference type="PharmGKB" id="PA38188"/>
<dbReference type="VEuPathDB" id="HostDB:ENSG00000100296"/>
<dbReference type="eggNOG" id="KOG2216">
    <property type="taxonomic scope" value="Eukaryota"/>
</dbReference>
<dbReference type="GeneTree" id="ENSGT00390000013777"/>
<dbReference type="HOGENOM" id="CLU_023759_1_0_1"/>
<dbReference type="InParanoid" id="Q13769"/>
<dbReference type="OMA" id="YEVMHLK"/>
<dbReference type="OrthoDB" id="20582at2759"/>
<dbReference type="PAN-GO" id="Q13769">
    <property type="GO annotations" value="4 GO annotations based on evolutionary models"/>
</dbReference>
<dbReference type="PhylomeDB" id="Q13769"/>
<dbReference type="TreeFam" id="TF314812"/>
<dbReference type="PathwayCommons" id="Q13769"/>
<dbReference type="Reactome" id="R-HSA-159236">
    <property type="pathway name" value="Transport of Mature mRNA derived from an Intron-Containing Transcript"/>
</dbReference>
<dbReference type="Reactome" id="R-HSA-72187">
    <property type="pathway name" value="mRNA 3'-end processing"/>
</dbReference>
<dbReference type="Reactome" id="R-HSA-73856">
    <property type="pathway name" value="RNA Polymerase II Transcription Termination"/>
</dbReference>
<dbReference type="Reactome" id="R-HSA-9680350">
    <property type="pathway name" value="Signaling by CSF1 (M-CSF) in myeloid cells"/>
</dbReference>
<dbReference type="SignaLink" id="Q13769"/>
<dbReference type="SIGNOR" id="Q13769"/>
<dbReference type="BioGRID-ORCS" id="8563">
    <property type="hits" value="780 hits in 1168 CRISPR screens"/>
</dbReference>
<dbReference type="ChiTaRS" id="THOC5">
    <property type="organism name" value="human"/>
</dbReference>
<dbReference type="GeneWiki" id="THOC5"/>
<dbReference type="GenomeRNAi" id="8563"/>
<dbReference type="Pharos" id="Q13769">
    <property type="development level" value="Tbio"/>
</dbReference>
<dbReference type="PRO" id="PR:Q13769"/>
<dbReference type="Proteomes" id="UP000005640">
    <property type="component" value="Chromosome 22"/>
</dbReference>
<dbReference type="RNAct" id="Q13769">
    <property type="molecule type" value="protein"/>
</dbReference>
<dbReference type="Bgee" id="ENSG00000100296">
    <property type="expression patterns" value="Expressed in mucosa of stomach and 197 other cell types or tissues"/>
</dbReference>
<dbReference type="ExpressionAtlas" id="Q13769">
    <property type="expression patterns" value="baseline and differential"/>
</dbReference>
<dbReference type="GO" id="GO:0005737">
    <property type="term" value="C:cytoplasm"/>
    <property type="evidence" value="ECO:0007669"/>
    <property type="project" value="UniProtKB-SubCell"/>
</dbReference>
<dbReference type="GO" id="GO:0005654">
    <property type="term" value="C:nucleoplasm"/>
    <property type="evidence" value="ECO:0000314"/>
    <property type="project" value="HPA"/>
</dbReference>
<dbReference type="GO" id="GO:0005634">
    <property type="term" value="C:nucleus"/>
    <property type="evidence" value="ECO:0000314"/>
    <property type="project" value="UniProtKB"/>
</dbReference>
<dbReference type="GO" id="GO:0000347">
    <property type="term" value="C:THO complex"/>
    <property type="evidence" value="ECO:0000314"/>
    <property type="project" value="UniProtKB"/>
</dbReference>
<dbReference type="GO" id="GO:0000445">
    <property type="term" value="C:THO complex part of transcription export complex"/>
    <property type="evidence" value="ECO:0000314"/>
    <property type="project" value="UniProtKB"/>
</dbReference>
<dbReference type="GO" id="GO:0000346">
    <property type="term" value="C:transcription export complex"/>
    <property type="evidence" value="ECO:0000314"/>
    <property type="project" value="UniProtKB"/>
</dbReference>
<dbReference type="GO" id="GO:0003729">
    <property type="term" value="F:mRNA binding"/>
    <property type="evidence" value="ECO:0000318"/>
    <property type="project" value="GO_Central"/>
</dbReference>
<dbReference type="GO" id="GO:0030224">
    <property type="term" value="P:monocyte differentiation"/>
    <property type="evidence" value="ECO:0000314"/>
    <property type="project" value="UniProtKB"/>
</dbReference>
<dbReference type="GO" id="GO:0006406">
    <property type="term" value="P:mRNA export from nucleus"/>
    <property type="evidence" value="ECO:0000314"/>
    <property type="project" value="UniProtKB"/>
</dbReference>
<dbReference type="GO" id="GO:0006397">
    <property type="term" value="P:mRNA processing"/>
    <property type="evidence" value="ECO:0007669"/>
    <property type="project" value="UniProtKB-KW"/>
</dbReference>
<dbReference type="GO" id="GO:0060215">
    <property type="term" value="P:primitive hemopoiesis"/>
    <property type="evidence" value="ECO:0000250"/>
    <property type="project" value="UniProtKB"/>
</dbReference>
<dbReference type="GO" id="GO:0008380">
    <property type="term" value="P:RNA splicing"/>
    <property type="evidence" value="ECO:0007669"/>
    <property type="project" value="UniProtKB-KW"/>
</dbReference>
<dbReference type="InterPro" id="IPR019163">
    <property type="entry name" value="THO_Thoc5"/>
</dbReference>
<dbReference type="PANTHER" id="PTHR13375">
    <property type="entry name" value="FMS INTERACTING PROTEIN"/>
    <property type="match status" value="1"/>
</dbReference>
<dbReference type="PANTHER" id="PTHR13375:SF3">
    <property type="entry name" value="THO COMPLEX SUBUNIT 5 HOMOLOG"/>
    <property type="match status" value="1"/>
</dbReference>
<dbReference type="Pfam" id="PF09766">
    <property type="entry name" value="FmiP_Thoc5"/>
    <property type="match status" value="1"/>
</dbReference>
<sequence>MSSESSKKRKPKVIRSDGAPAEGKRNRSDTEQEGKYYSEEAEVDLRDPGRDYELYKYTCQELQRLMAEIQDLKSRGGKDVAIEIEERRIQSCVHFMTLKKLNRLAHIRLKKGRDQTHEAKQKVDAYHLQLQNLLYEVMHLQKEITKCLEFKSKHEEIDLVSLEEFYKEAPPDISKAEVTMGDPHQQTLARLDWELEQRKRLAEKYRECLSNKEKILKEIEVKKEYLSSLQPRLNSIMQASLPVQEYLFMPFDQAHKQYETARHLPPPLYVLFVQATAYGQACDKTLSVAIEGSVDEAKALFKPPEDSQDDESDSDAEEEQTTKRRRPTLGVQLDDKRKEMLKRHPLSVMLDLKCKDDSVLHLTFYYLMNLNIMTVKAKVTTAMELITPISAGDLLSPDSVLSCLYPGDHGKKTPNPANQYQFDKVGILTLSDYVLELGHPYLWVQKLGGLHFPKEQPQQTVIADHSLSASHMETTMKLLKTRVQSRLALHKQFASLEHGIVPVTSDCQYLFPAKVVSRLVKWVTVAHEDYMELHFTKDIVDAGLAGDTNLYYMALIERGTAKLQAAVVLNPGYSSIPPVFQLCLNWKGEKTNSNDDNIRAMEGEVNVCYKELCGPWPSHQLLTNQLQRLCVLLDVYLETESHDDSVEGPKEFPQEKMCLRLFRGPSRMKPFKYNHPQGFFSHR</sequence>
<reference key="1">
    <citation type="journal article" date="1993" name="Hum. Mol. Genet.">
        <title>Cloning of a novel, anonymous gene from a megabase-range YAC and cosmid contig in the neurofibromatosis type 2/meningioma region on human chromosome 22q12.</title>
        <authorList>
            <person name="Xie Y.G."/>
            <person name="Han F.Y."/>
            <person name="Peyrard M."/>
            <person name="Ruttledge M.H."/>
            <person name="Fransson I."/>
            <person name="deJong P."/>
            <person name="Collins J."/>
            <person name="Dunham I."/>
            <person name="Nordenskjold M."/>
            <person name="Dumanski J.P."/>
        </authorList>
    </citation>
    <scope>NUCLEOTIDE SEQUENCE [GENOMIC DNA]</scope>
    <scope>VARIANTS ILE-525 AND ILE-579</scope>
    <source>
        <tissue>Fetus</tissue>
    </source>
</reference>
<reference key="2">
    <citation type="journal article" date="1999" name="DNA Res.">
        <title>Prediction of the coding sequences of unidentified human genes. XIII. The complete sequences of 100 new cDNA clones from brain which code for large proteins in vitro.</title>
        <authorList>
            <person name="Nagase T."/>
            <person name="Ishikawa K."/>
            <person name="Suyama M."/>
            <person name="Kikuno R."/>
            <person name="Hirosawa M."/>
            <person name="Miyajima N."/>
            <person name="Tanaka A."/>
            <person name="Kotani H."/>
            <person name="Nomura N."/>
            <person name="Ohara O."/>
        </authorList>
    </citation>
    <scope>NUCLEOTIDE SEQUENCE [LARGE SCALE MRNA]</scope>
    <scope>VARIANT ILE-525</scope>
    <source>
        <tissue>Brain</tissue>
    </source>
</reference>
<reference key="3">
    <citation type="journal article" date="2004" name="Genome Biol.">
        <title>A genome annotation-driven approach to cloning the human ORFeome.</title>
        <authorList>
            <person name="Collins J.E."/>
            <person name="Wright C.L."/>
            <person name="Edwards C.A."/>
            <person name="Davis M.P."/>
            <person name="Grinham J.A."/>
            <person name="Cole C.G."/>
            <person name="Goward M.E."/>
            <person name="Aguado B."/>
            <person name="Mallya M."/>
            <person name="Mokrab Y."/>
            <person name="Huckle E.J."/>
            <person name="Beare D.M."/>
            <person name="Dunham I."/>
        </authorList>
    </citation>
    <scope>NUCLEOTIDE SEQUENCE [LARGE SCALE MRNA]</scope>
    <scope>VARIANTS ILE-525 AND ILE-579</scope>
</reference>
<reference key="4">
    <citation type="journal article" date="1999" name="Nature">
        <title>The DNA sequence of human chromosome 22.</title>
        <authorList>
            <person name="Dunham I."/>
            <person name="Hunt A.R."/>
            <person name="Collins J.E."/>
            <person name="Bruskiewich R."/>
            <person name="Beare D.M."/>
            <person name="Clamp M."/>
            <person name="Smink L.J."/>
            <person name="Ainscough R."/>
            <person name="Almeida J.P."/>
            <person name="Babbage A.K."/>
            <person name="Bagguley C."/>
            <person name="Bailey J."/>
            <person name="Barlow K.F."/>
            <person name="Bates K.N."/>
            <person name="Beasley O.P."/>
            <person name="Bird C.P."/>
            <person name="Blakey S.E."/>
            <person name="Bridgeman A.M."/>
            <person name="Buck D."/>
            <person name="Burgess J."/>
            <person name="Burrill W.D."/>
            <person name="Burton J."/>
            <person name="Carder C."/>
            <person name="Carter N.P."/>
            <person name="Chen Y."/>
            <person name="Clark G."/>
            <person name="Clegg S.M."/>
            <person name="Cobley V.E."/>
            <person name="Cole C.G."/>
            <person name="Collier R.E."/>
            <person name="Connor R."/>
            <person name="Conroy D."/>
            <person name="Corby N.R."/>
            <person name="Coville G.J."/>
            <person name="Cox A.V."/>
            <person name="Davis J."/>
            <person name="Dawson E."/>
            <person name="Dhami P.D."/>
            <person name="Dockree C."/>
            <person name="Dodsworth S.J."/>
            <person name="Durbin R.M."/>
            <person name="Ellington A.G."/>
            <person name="Evans K.L."/>
            <person name="Fey J.M."/>
            <person name="Fleming K."/>
            <person name="French L."/>
            <person name="Garner A.A."/>
            <person name="Gilbert J.G.R."/>
            <person name="Goward M.E."/>
            <person name="Grafham D.V."/>
            <person name="Griffiths M.N.D."/>
            <person name="Hall C."/>
            <person name="Hall R.E."/>
            <person name="Hall-Tamlyn G."/>
            <person name="Heathcott R.W."/>
            <person name="Ho S."/>
            <person name="Holmes S."/>
            <person name="Hunt S.E."/>
            <person name="Jones M.C."/>
            <person name="Kershaw J."/>
            <person name="Kimberley A.M."/>
            <person name="King A."/>
            <person name="Laird G.K."/>
            <person name="Langford C.F."/>
            <person name="Leversha M.A."/>
            <person name="Lloyd C."/>
            <person name="Lloyd D.M."/>
            <person name="Martyn I.D."/>
            <person name="Mashreghi-Mohammadi M."/>
            <person name="Matthews L.H."/>
            <person name="Mccann O.T."/>
            <person name="Mcclay J."/>
            <person name="Mclaren S."/>
            <person name="McMurray A.A."/>
            <person name="Milne S.A."/>
            <person name="Mortimore B.J."/>
            <person name="Odell C.N."/>
            <person name="Pavitt R."/>
            <person name="Pearce A.V."/>
            <person name="Pearson D."/>
            <person name="Phillimore B.J.C.T."/>
            <person name="Phillips S.H."/>
            <person name="Plumb R.W."/>
            <person name="Ramsay H."/>
            <person name="Ramsey Y."/>
            <person name="Rogers L."/>
            <person name="Ross M.T."/>
            <person name="Scott C.E."/>
            <person name="Sehra H.K."/>
            <person name="Skuce C.D."/>
            <person name="Smalley S."/>
            <person name="Smith M.L."/>
            <person name="Soderlund C."/>
            <person name="Spragon L."/>
            <person name="Steward C.A."/>
            <person name="Sulston J.E."/>
            <person name="Swann R.M."/>
            <person name="Vaudin M."/>
            <person name="Wall M."/>
            <person name="Wallis J.M."/>
            <person name="Whiteley M.N."/>
            <person name="Willey D.L."/>
            <person name="Williams L."/>
            <person name="Williams S.A."/>
            <person name="Williamson H."/>
            <person name="Wilmer T.E."/>
            <person name="Wilming L."/>
            <person name="Wright C.L."/>
            <person name="Hubbard T."/>
            <person name="Bentley D.R."/>
            <person name="Beck S."/>
            <person name="Rogers J."/>
            <person name="Shimizu N."/>
            <person name="Minoshima S."/>
            <person name="Kawasaki K."/>
            <person name="Sasaki T."/>
            <person name="Asakawa S."/>
            <person name="Kudoh J."/>
            <person name="Shintani A."/>
            <person name="Shibuya K."/>
            <person name="Yoshizaki Y."/>
            <person name="Aoki N."/>
            <person name="Mitsuyama S."/>
            <person name="Roe B.A."/>
            <person name="Chen F."/>
            <person name="Chu L."/>
            <person name="Crabtree J."/>
            <person name="Deschamps S."/>
            <person name="Do A."/>
            <person name="Do T."/>
            <person name="Dorman A."/>
            <person name="Fang F."/>
            <person name="Fu Y."/>
            <person name="Hu P."/>
            <person name="Hua A."/>
            <person name="Kenton S."/>
            <person name="Lai H."/>
            <person name="Lao H.I."/>
            <person name="Lewis J."/>
            <person name="Lewis S."/>
            <person name="Lin S.-P."/>
            <person name="Loh P."/>
            <person name="Malaj E."/>
            <person name="Nguyen T."/>
            <person name="Pan H."/>
            <person name="Phan S."/>
            <person name="Qi S."/>
            <person name="Qian Y."/>
            <person name="Ray L."/>
            <person name="Ren Q."/>
            <person name="Shaull S."/>
            <person name="Sloan D."/>
            <person name="Song L."/>
            <person name="Wang Q."/>
            <person name="Wang Y."/>
            <person name="Wang Z."/>
            <person name="White J."/>
            <person name="Willingham D."/>
            <person name="Wu H."/>
            <person name="Yao Z."/>
            <person name="Zhan M."/>
            <person name="Zhang G."/>
            <person name="Chissoe S."/>
            <person name="Murray J."/>
            <person name="Miller N."/>
            <person name="Minx P."/>
            <person name="Fulton R."/>
            <person name="Johnson D."/>
            <person name="Bemis G."/>
            <person name="Bentley D."/>
            <person name="Bradshaw H."/>
            <person name="Bourne S."/>
            <person name="Cordes M."/>
            <person name="Du Z."/>
            <person name="Fulton L."/>
            <person name="Goela D."/>
            <person name="Graves T."/>
            <person name="Hawkins J."/>
            <person name="Hinds K."/>
            <person name="Kemp K."/>
            <person name="Latreille P."/>
            <person name="Layman D."/>
            <person name="Ozersky P."/>
            <person name="Rohlfing T."/>
            <person name="Scheet P."/>
            <person name="Walker C."/>
            <person name="Wamsley A."/>
            <person name="Wohldmann P."/>
            <person name="Pepin K."/>
            <person name="Nelson J."/>
            <person name="Korf I."/>
            <person name="Bedell J.A."/>
            <person name="Hillier L.W."/>
            <person name="Mardis E."/>
            <person name="Waterston R."/>
            <person name="Wilson R."/>
            <person name="Emanuel B.S."/>
            <person name="Shaikh T."/>
            <person name="Kurahashi H."/>
            <person name="Saitta S."/>
            <person name="Budarf M.L."/>
            <person name="McDermid H.E."/>
            <person name="Johnson A."/>
            <person name="Wong A.C.C."/>
            <person name="Morrow B.E."/>
            <person name="Edelmann L."/>
            <person name="Kim U.J."/>
            <person name="Shizuya H."/>
            <person name="Simon M.I."/>
            <person name="Dumanski J.P."/>
            <person name="Peyrard M."/>
            <person name="Kedra D."/>
            <person name="Seroussi E."/>
            <person name="Fransson I."/>
            <person name="Tapia I."/>
            <person name="Bruder C.E."/>
            <person name="O'Brien K.P."/>
            <person name="Wilkinson P."/>
            <person name="Bodenteich A."/>
            <person name="Hartman K."/>
            <person name="Hu X."/>
            <person name="Khan A.S."/>
            <person name="Lane L."/>
            <person name="Tilahun Y."/>
            <person name="Wright H."/>
        </authorList>
    </citation>
    <scope>NUCLEOTIDE SEQUENCE [LARGE SCALE GENOMIC DNA]</scope>
</reference>
<reference key="5">
    <citation type="journal article" date="2004" name="Genome Res.">
        <title>The status, quality, and expansion of the NIH full-length cDNA project: the Mammalian Gene Collection (MGC).</title>
        <authorList>
            <consortium name="The MGC Project Team"/>
        </authorList>
    </citation>
    <scope>NUCLEOTIDE SEQUENCE [LARGE SCALE MRNA]</scope>
    <scope>VARIANTS ILE-525 AND ILE-579</scope>
    <source>
        <tissue>Colon</tissue>
    </source>
</reference>
<reference key="6">
    <citation type="submission" date="1998-05" db="EMBL/GenBank/DDBJ databases">
        <title>Differential expression of placental genes.</title>
        <authorList>
            <person name="Page N.M."/>
            <person name="Butlin D.J."/>
            <person name="Manyonda I."/>
            <person name="Bicknell A.B."/>
            <person name="Lowry P.J."/>
        </authorList>
    </citation>
    <scope>NUCLEOTIDE SEQUENCE [MRNA] OF 548-650</scope>
    <source>
        <tissue>Placenta</tissue>
    </source>
</reference>
<reference key="7">
    <citation type="journal article" date="2005" name="Cancer Res.">
        <title>Linking transcriptional elongation and messenger RNA export to metastatic breast cancers.</title>
        <authorList>
            <person name="Guo S."/>
            <person name="Hakimi M.A."/>
            <person name="Baillat D."/>
            <person name="Chen X."/>
            <person name="Farber M.J."/>
            <person name="Klein-Szanto A.J."/>
            <person name="Cooch N.S."/>
            <person name="Godwin A.K."/>
            <person name="Shiekhattar R."/>
        </authorList>
    </citation>
    <scope>IDENTIFICATION IN THE TREX COMPLEX</scope>
    <scope>FUNCTION OF THE TREX COMPLEX</scope>
    <scope>IDENTIFICATION BY MASS SPECTROMETRY</scope>
</reference>
<reference key="8">
    <citation type="journal article" date="2005" name="Genes Dev.">
        <title>Recruitment of the human TREX complex to mRNA during splicing.</title>
        <authorList>
            <person name="Masuda S."/>
            <person name="Das R."/>
            <person name="Cheng H."/>
            <person name="Hurt E."/>
            <person name="Dorman N."/>
            <person name="Reed R."/>
        </authorList>
    </citation>
    <scope>IDENTIFICATION IN THE THO AND TREX COMPLEX</scope>
    <scope>FUNCTION OF THE TREX COMPLEX</scope>
    <scope>IDENTIFICATION BY MASS SPECTROMETRY</scope>
</reference>
<reference key="9">
    <citation type="journal article" date="2006" name="Cell">
        <title>Human mRNA export machinery recruited to the 5' end of mRNA.</title>
        <authorList>
            <person name="Cheng H."/>
            <person name="Dufu K."/>
            <person name="Lee C.-S."/>
            <person name="Hsu J.L."/>
            <person name="Dias A."/>
            <person name="Reed R."/>
        </authorList>
    </citation>
    <scope>FUNCTION OF THE TREX COMPLEX</scope>
</reference>
<reference key="10">
    <citation type="journal article" date="2007" name="Science">
        <title>ATM and ATR substrate analysis reveals extensive protein networks responsive to DNA damage.</title>
        <authorList>
            <person name="Matsuoka S."/>
            <person name="Ballif B.A."/>
            <person name="Smogorzewska A."/>
            <person name="McDonald E.R. III"/>
            <person name="Hurov K.E."/>
            <person name="Luo J."/>
            <person name="Bakalarski C.E."/>
            <person name="Zhao Z."/>
            <person name="Solimini N."/>
            <person name="Lerenthal Y."/>
            <person name="Shiloh Y."/>
            <person name="Gygi S.P."/>
            <person name="Elledge S.J."/>
        </authorList>
    </citation>
    <scope>PHOSPHORYLATION [LARGE SCALE ANALYSIS] AT SER-307; SER-312 AND SER-314</scope>
    <scope>IDENTIFICATION BY MASS SPECTROMETRY [LARGE SCALE ANALYSIS]</scope>
    <source>
        <tissue>Embryonic kidney</tissue>
    </source>
</reference>
<reference key="11">
    <citation type="journal article" date="2008" name="Br. J. Haematol.">
        <title>THOC5 spliceosome protein: a target for leukaemogenic tyrosine kinases that affects inositol lipid turnover.</title>
        <authorList>
            <person name="Pierce A."/>
            <person name="Carney L."/>
            <person name="Hamza H.G."/>
            <person name="Griffiths J.R."/>
            <person name="Zhang L."/>
            <person name="Whetton B.A."/>
            <person name="Gonzalez Sanchez M.B."/>
            <person name="Tamura T."/>
            <person name="Sternberg D."/>
            <person name="Whetton A.D."/>
        </authorList>
    </citation>
    <scope>PHOSPHORYLATION AT TYR-225</scope>
    <scope>IDENTIFICATION BY MASS SPECTROMETRY</scope>
</reference>
<reference key="12">
    <citation type="journal article" date="2008" name="PLoS Pathog.">
        <title>Recruitment of the complete hTREX complex is required for Kaposi's sarcoma-associated herpesvirus intronless mRNA nuclear export and virus replication.</title>
        <authorList>
            <person name="Boyne J.R."/>
            <person name="Colgan K.J."/>
            <person name="Whitehouse A."/>
        </authorList>
    </citation>
    <scope>FUNCTION OF THE TREX COMPLEX (MICROBIAL INFECTION)</scope>
</reference>
<reference key="13">
    <citation type="journal article" date="2008" name="Proc. Natl. Acad. Sci. U.S.A.">
        <title>A quantitative atlas of mitotic phosphorylation.</title>
        <authorList>
            <person name="Dephoure N."/>
            <person name="Zhou C."/>
            <person name="Villen J."/>
            <person name="Beausoleil S.A."/>
            <person name="Bakalarski C.E."/>
            <person name="Elledge S.J."/>
            <person name="Gygi S.P."/>
        </authorList>
    </citation>
    <scope>PHOSPHORYLATION [LARGE SCALE ANALYSIS] AT SER-307; SER-312 AND SER-314</scope>
    <scope>IDENTIFICATION BY MASS SPECTROMETRY [LARGE SCALE ANALYSIS]</scope>
    <source>
        <tissue>Cervix carcinoma</tissue>
    </source>
</reference>
<reference key="14">
    <citation type="journal article" date="2009" name="Anal. Chem.">
        <title>Lys-N and trypsin cover complementary parts of the phosphoproteome in a refined SCX-based approach.</title>
        <authorList>
            <person name="Gauci S."/>
            <person name="Helbig A.O."/>
            <person name="Slijper M."/>
            <person name="Krijgsveld J."/>
            <person name="Heck A.J."/>
            <person name="Mohammed S."/>
        </authorList>
    </citation>
    <scope>IDENTIFICATION BY MASS SPECTROMETRY [LARGE SCALE ANALYSIS]</scope>
</reference>
<reference key="15">
    <citation type="journal article" date="2009" name="EMBO J.">
        <title>Adaptor Aly and co-adaptor Thoc5 function in the Tap-p15-mediated nuclear export of HSP70 mRNA.</title>
        <authorList>
            <person name="Katahira J."/>
            <person name="Inoue H."/>
            <person name="Hurt E."/>
            <person name="Yoneda Y."/>
        </authorList>
    </citation>
    <scope>FUNCTION</scope>
    <scope>SUBCELLULAR LOCATION</scope>
    <scope>INTERACTION WITH ALYREF/THOC4 AND NXF1</scope>
</reference>
<reference key="16">
    <citation type="journal article" date="2009" name="FEBS Lett.">
        <title>Nuclear localization of the pre-mRNA associating protein THOC7 depends upon its direct interaction with Fms tyrosine kinase interacting protein (FMIP).</title>
        <authorList>
            <person name="El Bounkari O."/>
            <person name="Guria A."/>
            <person name="Klebba-Faerber S."/>
            <person name="Claussen M."/>
            <person name="Pieler T."/>
            <person name="Griffiths J.R."/>
            <person name="Whetton A.D."/>
            <person name="Koch A."/>
            <person name="Tamura T."/>
        </authorList>
    </citation>
    <scope>SUBCELLULAR LOCATION</scope>
    <scope>INTERACTION WITH THOC7</scope>
</reference>
<reference key="17">
    <citation type="journal article" date="2009" name="Sci. Signal.">
        <title>Quantitative phosphoproteomic analysis of T cell receptor signaling reveals system-wide modulation of protein-protein interactions.</title>
        <authorList>
            <person name="Mayya V."/>
            <person name="Lundgren D.H."/>
            <person name="Hwang S.-I."/>
            <person name="Rezaul K."/>
            <person name="Wu L."/>
            <person name="Eng J.K."/>
            <person name="Rodionov V."/>
            <person name="Han D.K."/>
        </authorList>
    </citation>
    <scope>PHOSPHORYLATION [LARGE SCALE ANALYSIS] AT SER-307; SER-312 AND SER-314</scope>
    <scope>IDENTIFICATION BY MASS SPECTROMETRY [LARGE SCALE ANALYSIS]</scope>
    <source>
        <tissue>Leukemic T-cell</tissue>
    </source>
</reference>
<reference key="18">
    <citation type="journal article" date="2010" name="Sci. Signal.">
        <title>Quantitative phosphoproteomics reveals widespread full phosphorylation site occupancy during mitosis.</title>
        <authorList>
            <person name="Olsen J.V."/>
            <person name="Vermeulen M."/>
            <person name="Santamaria A."/>
            <person name="Kumar C."/>
            <person name="Miller M.L."/>
            <person name="Jensen L.J."/>
            <person name="Gnad F."/>
            <person name="Cox J."/>
            <person name="Jensen T.S."/>
            <person name="Nigg E.A."/>
            <person name="Brunak S."/>
            <person name="Mann M."/>
        </authorList>
    </citation>
    <scope>PHOSPHORYLATION [LARGE SCALE ANALYSIS] AT SER-307; SER-312; SER-314 AND THR-328</scope>
    <scope>IDENTIFICATION BY MASS SPECTROMETRY [LARGE SCALE ANALYSIS]</scope>
    <source>
        <tissue>Cervix carcinoma</tissue>
    </source>
</reference>
<reference key="19">
    <citation type="journal article" date="2011" name="BMC Syst. Biol.">
        <title>Initial characterization of the human central proteome.</title>
        <authorList>
            <person name="Burkard T.R."/>
            <person name="Planyavsky M."/>
            <person name="Kaupe I."/>
            <person name="Breitwieser F.P."/>
            <person name="Buerckstuemmer T."/>
            <person name="Bennett K.L."/>
            <person name="Superti-Furga G."/>
            <person name="Colinge J."/>
        </authorList>
    </citation>
    <scope>IDENTIFICATION BY MASS SPECTROMETRY [LARGE SCALE ANALYSIS]</scope>
</reference>
<reference key="20">
    <citation type="journal article" date="2011" name="PLoS Genet.">
        <title>Genome instability and transcription elongation impairment in human cells depleted of THO/TREX.</title>
        <authorList>
            <person name="Dominguez-Sanchez M.S."/>
            <person name="Barroso S."/>
            <person name="Gomez-Gonzalez B."/>
            <person name="Luna R."/>
            <person name="Aguilera A."/>
        </authorList>
    </citation>
    <scope>FUNCTION</scope>
</reference>
<reference key="21">
    <citation type="journal article" date="2011" name="Sci. Signal.">
        <title>System-wide temporal characterization of the proteome and phosphoproteome of human embryonic stem cell differentiation.</title>
        <authorList>
            <person name="Rigbolt K.T."/>
            <person name="Prokhorova T.A."/>
            <person name="Akimov V."/>
            <person name="Henningsen J."/>
            <person name="Johansen P.T."/>
            <person name="Kratchmarova I."/>
            <person name="Kassem M."/>
            <person name="Mann M."/>
            <person name="Olsen J.V."/>
            <person name="Blagoev B."/>
        </authorList>
    </citation>
    <scope>PHOSPHORYLATION [LARGE SCALE ANALYSIS] AT SER-307; SER-312 AND SER-314</scope>
    <scope>IDENTIFICATION BY MASS SPECTROMETRY [LARGE SCALE ANALYSIS]</scope>
</reference>
<reference key="22">
    <citation type="journal article" date="2012" name="Nat. Commun.">
        <title>TREX exposes the RNA-binding domain of Nxf1 to enable mRNA export.</title>
        <authorList>
            <person name="Viphakone N."/>
            <person name="Hautbergue G.M."/>
            <person name="Walsh M."/>
            <person name="Chang C.T."/>
            <person name="Holland A."/>
            <person name="Folco E.G."/>
            <person name="Reed R."/>
            <person name="Wilson S.A."/>
        </authorList>
    </citation>
    <scope>FUNCTION</scope>
</reference>
<reference key="23">
    <citation type="journal article" date="2013" name="Nat. Commun.">
        <authorList>
            <person name="Viphakone N."/>
            <person name="Hautbergue G.M."/>
            <person name="Walsh M."/>
            <person name="Chang C.T."/>
            <person name="Holland A."/>
            <person name="Folco E.G."/>
            <person name="Reed R."/>
            <person name="Wilson S.A."/>
        </authorList>
    </citation>
    <scope>ERRATUM OF PUBMED:22893130</scope>
</reference>
<reference key="24">
    <citation type="journal article" date="2012" name="Proc. Natl. Acad. Sci. U.S.A.">
        <title>N-terminal acetylome analyses and functional insights of the N-terminal acetyltransferase NatB.</title>
        <authorList>
            <person name="Van Damme P."/>
            <person name="Lasa M."/>
            <person name="Polevoda B."/>
            <person name="Gazquez C."/>
            <person name="Elosegui-Artola A."/>
            <person name="Kim D.S."/>
            <person name="De Juan-Pardo E."/>
            <person name="Demeyer K."/>
            <person name="Hole K."/>
            <person name="Larrea E."/>
            <person name="Timmerman E."/>
            <person name="Prieto J."/>
            <person name="Arnesen T."/>
            <person name="Sherman F."/>
            <person name="Gevaert K."/>
            <person name="Aldabe R."/>
        </authorList>
    </citation>
    <scope>ACETYLATION [LARGE SCALE ANALYSIS] AT SER-2</scope>
    <scope>CLEAVAGE OF INITIATOR METHIONINE [LARGE SCALE ANALYSIS]</scope>
    <scope>IDENTIFICATION BY MASS SPECTROMETRY [LARGE SCALE ANALYSIS]</scope>
</reference>
<reference key="25">
    <citation type="journal article" date="2013" name="EMBO J.">
        <title>Chtop is a component of the dynamic TREX mRNA export complex.</title>
        <authorList>
            <person name="Chang C.T."/>
            <person name="Hautbergue G.M."/>
            <person name="Walsh M.J."/>
            <person name="Viphakone N."/>
            <person name="van Dijk T.B."/>
            <person name="Philipsen S."/>
            <person name="Wilson S.A."/>
        </authorList>
    </citation>
    <scope>INTERACTION WITH NXF1</scope>
</reference>
<reference key="26">
    <citation type="journal article" date="2013" name="J. Proteome Res.">
        <title>Toward a comprehensive characterization of a human cancer cell phosphoproteome.</title>
        <authorList>
            <person name="Zhou H."/>
            <person name="Di Palma S."/>
            <person name="Preisinger C."/>
            <person name="Peng M."/>
            <person name="Polat A.N."/>
            <person name="Heck A.J."/>
            <person name="Mohammed S."/>
        </authorList>
    </citation>
    <scope>PHOSPHORYLATION [LARGE SCALE ANALYSIS] AT SER-312; SER-314 AND THR-328</scope>
    <scope>IDENTIFICATION BY MASS SPECTROMETRY [LARGE SCALE ANALYSIS]</scope>
    <source>
        <tissue>Cervix carcinoma</tissue>
        <tissue>Erythroleukemia</tissue>
    </source>
</reference>
<reference key="27">
    <citation type="journal article" date="2013" name="Leukemia">
        <title>A pathway from leukemogenic oncogenes and stem cell chemokines to RNA processing via THOC5.</title>
        <authorList>
            <person name="Griaud F."/>
            <person name="Pierce A."/>
            <person name="Gonzalez Sanchez M.B."/>
            <person name="Scott M."/>
            <person name="Abraham S.A."/>
            <person name="Holyoake T.L."/>
            <person name="Tran D.D."/>
            <person name="Tamura T."/>
            <person name="Whetton A.D."/>
        </authorList>
    </citation>
    <scope>PHOSPHORYLATION AT TYR-225 BY SRC</scope>
    <scope>MUTAGENESIS OF TYR-225</scope>
    <scope>RNA-BINDING</scope>
</reference>
<reference key="28">
    <citation type="journal article" date="2013" name="Nucleic Acids Res.">
        <title>Human TREX component Thoc5 affects alternative polyadenylation site choice by recruiting mammalian cleavage factor I.</title>
        <authorList>
            <person name="Katahira J."/>
            <person name="Okuzaki D."/>
            <person name="Inoue H."/>
            <person name="Yoneda Y."/>
            <person name="Maehara K."/>
            <person name="Ohkawa Y."/>
        </authorList>
    </citation>
    <scope>FUNCTION</scope>
    <scope>INTERACTION WITH CPSF6</scope>
</reference>
<reference key="29">
    <citation type="journal article" date="2014" name="J. Proteomics">
        <title>An enzyme assisted RP-RPLC approach for in-depth analysis of human liver phosphoproteome.</title>
        <authorList>
            <person name="Bian Y."/>
            <person name="Song C."/>
            <person name="Cheng K."/>
            <person name="Dong M."/>
            <person name="Wang F."/>
            <person name="Huang J."/>
            <person name="Sun D."/>
            <person name="Wang L."/>
            <person name="Ye M."/>
            <person name="Zou H."/>
        </authorList>
    </citation>
    <scope>PHOSPHORYLATION [LARGE SCALE ANALYSIS] AT SER-307; SER-312; SER-314 AND THR-328</scope>
    <scope>IDENTIFICATION BY MASS SPECTROMETRY [LARGE SCALE ANALYSIS]</scope>
    <source>
        <tissue>Liver</tissue>
    </source>
</reference>
<reference key="30">
    <citation type="journal article" date="2015" name="Nucleic Acids Res.">
        <title>Luzp4 defines a new mRNA export pathway in cancer cells.</title>
        <authorList>
            <person name="Viphakone N."/>
            <person name="Cumberbatch M.G."/>
            <person name="Livingstone M.J."/>
            <person name="Heath P.R."/>
            <person name="Dickman M.J."/>
            <person name="Catto J.W."/>
            <person name="Wilson S.A."/>
        </authorList>
    </citation>
    <scope>INTERACTION WITH LUZP4</scope>
</reference>
<reference key="31">
    <citation type="journal article" date="2015" name="Nat. Commun.">
        <title>mRNA export through an additional cap-binding complex consisting of NCBP1 and NCBP3.</title>
        <authorList>
            <person name="Gebhardt A."/>
            <person name="Habjan M."/>
            <person name="Benda C."/>
            <person name="Meiler A."/>
            <person name="Haas D.A."/>
            <person name="Hein M.Y."/>
            <person name="Mann A."/>
            <person name="Mann M."/>
            <person name="Habermann B."/>
            <person name="Pichlmair A."/>
        </authorList>
    </citation>
    <scope>INTERACTION WITH NCBP3</scope>
</reference>
<reference key="32">
    <citation type="journal article" date="2017" name="Nat. Struct. Mol. Biol.">
        <title>Site-specific mapping of the human SUMO proteome reveals co-modification with phosphorylation.</title>
        <authorList>
            <person name="Hendriks I.A."/>
            <person name="Lyon D."/>
            <person name="Young C."/>
            <person name="Jensen L.J."/>
            <person name="Vertegaal A.C."/>
            <person name="Nielsen M.L."/>
        </authorList>
    </citation>
    <scope>SUMOYLATION [LARGE SCALE ANALYSIS] AT LYS-153</scope>
    <scope>IDENTIFICATION BY MASS SPECTROMETRY [LARGE SCALE ANALYSIS]</scope>
</reference>
<reference key="33">
    <citation type="journal article" date="2006" name="Science">
        <title>The consensus coding sequences of human breast and colorectal cancers.</title>
        <authorList>
            <person name="Sjoeblom T."/>
            <person name="Jones S."/>
            <person name="Wood L.D."/>
            <person name="Parsons D.W."/>
            <person name="Lin J."/>
            <person name="Barber T.D."/>
            <person name="Mandelker D."/>
            <person name="Leary R.J."/>
            <person name="Ptak J."/>
            <person name="Silliman N."/>
            <person name="Szabo S."/>
            <person name="Buckhaults P."/>
            <person name="Farrell C."/>
            <person name="Meeh P."/>
            <person name="Markowitz S.D."/>
            <person name="Willis J."/>
            <person name="Dawson D."/>
            <person name="Willson J.K.V."/>
            <person name="Gazdar A.F."/>
            <person name="Hartigan J."/>
            <person name="Wu L."/>
            <person name="Liu C."/>
            <person name="Parmigiani G."/>
            <person name="Park B.H."/>
            <person name="Bachman K.E."/>
            <person name="Papadopoulos N."/>
            <person name="Vogelstein B."/>
            <person name="Kinzler K.W."/>
            <person name="Velculescu V.E."/>
        </authorList>
    </citation>
    <scope>VARIANTS [LARGE SCALE ANALYSIS] LYS-380 AND SER-499</scope>
</reference>
<reference evidence="25" key="34">
    <citation type="journal article" date="2020" name="Elife">
        <title>Structure of the human core transcription-export complex reveals a hub for multivalent interactions.</title>
        <authorList>
            <person name="Puehringer T."/>
            <person name="Hohmann U."/>
            <person name="Fin L."/>
            <person name="Pacheco-Fiallos B."/>
            <person name="Schellhaas U."/>
            <person name="Brennecke J."/>
            <person name="Plaschka C."/>
        </authorList>
    </citation>
    <scope>STRUCTURE BY ELECTRON MICROSCOPY (3.30 ANGSTROMS) IN THO-DDX39B COMPLEX</scope>
    <scope>FUNCTION</scope>
    <scope>SUBUNIT</scope>
</reference>
<reference evidence="26 27" key="35">
    <citation type="journal article" date="2023" name="Nature">
        <title>mRNA recognition and packaging by the human transcription-export complex.</title>
        <authorList>
            <person name="Pacheco-Fiallos B."/>
            <person name="Vorlander M.K."/>
            <person name="Riabov-Bassat D."/>
            <person name="Fin L."/>
            <person name="O'Reilly F.J."/>
            <person name="Ayala F.I."/>
            <person name="Schellhaas U."/>
            <person name="Rappsilber J."/>
            <person name="Plaschka C."/>
        </authorList>
    </citation>
    <scope>STRUCTURE BY ELECTRON MICROSCOPY (3.45 ANGSTROMS) IN TREX COMPLEX</scope>
    <scope>SUBUNIT</scope>
</reference>
<name>THOC5_HUMAN</name>
<feature type="initiator methionine" description="Removed" evidence="33">
    <location>
        <position position="1"/>
    </location>
</feature>
<feature type="chain" id="PRO_0000079577" description="THO complex subunit 5">
    <location>
        <begin position="2"/>
        <end position="683"/>
    </location>
</feature>
<feature type="region of interest" description="Disordered" evidence="3">
    <location>
        <begin position="1"/>
        <end position="42"/>
    </location>
</feature>
<feature type="region of interest" description="Interaction with THOC7" evidence="13">
    <location>
        <begin position="2"/>
        <end position="199"/>
    </location>
</feature>
<feature type="region of interest" description="Interaction with CSF1R" evidence="2">
    <location>
        <begin position="2"/>
        <end position="144"/>
    </location>
</feature>
<feature type="region of interest" description="Tandem RWD domains" evidence="20 25 26 27">
    <location>
        <begin position="247"/>
        <end position="683"/>
    </location>
</feature>
<feature type="region of interest" description="Disordered" evidence="3">
    <location>
        <begin position="301"/>
        <end position="336"/>
    </location>
</feature>
<feature type="coiled-coil region" evidence="20 21 25 26 27">
    <location>
        <begin position="81"/>
        <end position="247"/>
    </location>
</feature>
<feature type="short sequence motif" description="Nuclear localization signal" evidence="1">
    <location>
        <begin position="7"/>
        <end position="10"/>
    </location>
</feature>
<feature type="compositionally biased region" description="Basic and acidic residues" evidence="3">
    <location>
        <begin position="22"/>
        <end position="42"/>
    </location>
</feature>
<feature type="compositionally biased region" description="Acidic residues" evidence="3">
    <location>
        <begin position="306"/>
        <end position="319"/>
    </location>
</feature>
<feature type="modified residue" description="N-acetylserine" evidence="33">
    <location>
        <position position="2"/>
    </location>
</feature>
<feature type="modified residue" description="Phosphoserine" evidence="2">
    <location>
        <position position="5"/>
    </location>
</feature>
<feature type="modified residue" description="Phosphoserine" evidence="2">
    <location>
        <position position="6"/>
    </location>
</feature>
<feature type="modified residue" description="Phosphotyrosine; by SRC" evidence="11 15">
    <location>
        <position position="225"/>
    </location>
</feature>
<feature type="modified residue" description="Phosphoserine" evidence="28 29 30 31 32 35">
    <location>
        <position position="307"/>
    </location>
</feature>
<feature type="modified residue" description="Phosphoserine" evidence="28 29 30 31 32 34 35">
    <location>
        <position position="312"/>
    </location>
</feature>
<feature type="modified residue" description="Phosphoserine" evidence="28 29 30 31 32 34 35">
    <location>
        <position position="314"/>
    </location>
</feature>
<feature type="modified residue" description="Phosphothreonine" evidence="31 34 35">
    <location>
        <position position="328"/>
    </location>
</feature>
<feature type="cross-link" description="Glycyl lysine isopeptide (Lys-Gly) (interchain with G-Cter in SUMO2)" evidence="36">
    <location>
        <position position="153"/>
    </location>
</feature>
<feature type="sequence variant" id="VAR_035692" description="In a breast cancer sample; somatic mutation; dbSNP:rs1264823745." evidence="9">
    <original>T</original>
    <variation>K</variation>
    <location>
        <position position="380"/>
    </location>
</feature>
<feature type="sequence variant" id="VAR_037134" description="In dbSNP:rs8141153.">
    <original>T</original>
    <variation>S</variation>
    <location>
        <position position="475"/>
    </location>
</feature>
<feature type="sequence variant" id="VAR_035693" description="In a breast cancer sample; somatic mutation; dbSNP:rs1280359906." evidence="9">
    <original>G</original>
    <variation>S</variation>
    <location>
        <position position="499"/>
    </location>
</feature>
<feature type="sequence variant" id="VAR_037135" description="In dbSNP:rs737976." evidence="4 5 6 22">
    <original>V</original>
    <variation>I</variation>
    <location>
        <position position="525"/>
    </location>
</feature>
<feature type="sequence variant" id="VAR_021410" description="In dbSNP:rs1049534." evidence="5 6 22">
    <original>V</original>
    <variation>I</variation>
    <location>
        <position position="579"/>
    </location>
</feature>
<feature type="mutagenesis site" description="Impairs mRNA binding, enhances CXCL12-dependent cell migration." evidence="15">
    <original>Y</original>
    <variation>F</variation>
    <location>
        <position position="225"/>
    </location>
</feature>
<feature type="helix" evidence="37">
    <location>
        <begin position="42"/>
        <end position="46"/>
    </location>
</feature>
<feature type="helix" evidence="37">
    <location>
        <begin position="48"/>
        <end position="54"/>
    </location>
</feature>
<feature type="helix" evidence="37">
    <location>
        <begin position="56"/>
        <end position="73"/>
    </location>
</feature>
<feature type="helix" evidence="37">
    <location>
        <begin position="82"/>
        <end position="136"/>
    </location>
</feature>
<feature type="helix" evidence="37">
    <location>
        <begin position="138"/>
        <end position="147"/>
    </location>
</feature>
<feature type="helix" evidence="37">
    <location>
        <begin position="162"/>
        <end position="168"/>
    </location>
</feature>
<feature type="helix" evidence="37">
    <location>
        <begin position="171"/>
        <end position="174"/>
    </location>
</feature>
<feature type="helix" evidence="37">
    <location>
        <begin position="176"/>
        <end position="178"/>
    </location>
</feature>
<feature type="helix" evidence="37">
    <location>
        <begin position="183"/>
        <end position="188"/>
    </location>
</feature>
<feature type="helix" evidence="37">
    <location>
        <begin position="190"/>
        <end position="246"/>
    </location>
</feature>
<feature type="helix" evidence="37">
    <location>
        <begin position="253"/>
        <end position="261"/>
    </location>
</feature>
<feature type="helix" evidence="37">
    <location>
        <begin position="266"/>
        <end position="281"/>
    </location>
</feature>
<feature type="strand" evidence="37">
    <location>
        <begin position="285"/>
        <end position="292"/>
    </location>
</feature>
<feature type="helix" evidence="37">
    <location>
        <begin position="294"/>
        <end position="298"/>
    </location>
</feature>
<feature type="helix" evidence="37">
    <location>
        <begin position="334"/>
        <end position="340"/>
    </location>
</feature>
<feature type="strand" evidence="37">
    <location>
        <begin position="347"/>
        <end position="354"/>
    </location>
</feature>
<feature type="turn" evidence="37">
    <location>
        <begin position="355"/>
        <end position="357"/>
    </location>
</feature>
<feature type="strand" evidence="37">
    <location>
        <begin position="358"/>
        <end position="367"/>
    </location>
</feature>
<feature type="turn" evidence="37">
    <location>
        <begin position="368"/>
        <end position="371"/>
    </location>
</feature>
<feature type="strand" evidence="37">
    <location>
        <begin position="372"/>
        <end position="383"/>
    </location>
</feature>
<feature type="turn" evidence="37">
    <location>
        <begin position="389"/>
        <end position="393"/>
    </location>
</feature>
<feature type="strand" evidence="37">
    <location>
        <begin position="399"/>
        <end position="401"/>
    </location>
</feature>
<feature type="strand" evidence="37">
    <location>
        <begin position="404"/>
        <end position="406"/>
    </location>
</feature>
<feature type="helix" evidence="37">
    <location>
        <begin position="416"/>
        <end position="423"/>
    </location>
</feature>
<feature type="helix" evidence="37">
    <location>
        <begin position="431"/>
        <end position="437"/>
    </location>
</feature>
<feature type="helix" evidence="37">
    <location>
        <begin position="442"/>
        <end position="448"/>
    </location>
</feature>
<feature type="helix" evidence="37">
    <location>
        <begin position="465"/>
        <end position="496"/>
    </location>
</feature>
<feature type="turn" evidence="37">
    <location>
        <begin position="497"/>
        <end position="499"/>
    </location>
</feature>
<feature type="helix" evidence="37">
    <location>
        <begin position="507"/>
        <end position="510"/>
    </location>
</feature>
<feature type="strand" evidence="37">
    <location>
        <begin position="518"/>
        <end position="525"/>
    </location>
</feature>
<feature type="helix" evidence="37">
    <location>
        <begin position="527"/>
        <end position="531"/>
    </location>
</feature>
<feature type="helix" evidence="37">
    <location>
        <begin position="537"/>
        <end position="542"/>
    </location>
</feature>
<feature type="strand" evidence="37">
    <location>
        <begin position="550"/>
        <end position="558"/>
    </location>
</feature>
<feature type="strand" evidence="37">
    <location>
        <begin position="561"/>
        <end position="569"/>
    </location>
</feature>
<feature type="turn" evidence="37">
    <location>
        <begin position="573"/>
        <end position="575"/>
    </location>
</feature>
<feature type="strand" evidence="37">
    <location>
        <begin position="579"/>
        <end position="588"/>
    </location>
</feature>
<feature type="turn" evidence="37">
    <location>
        <begin position="592"/>
        <end position="594"/>
    </location>
</feature>
<feature type="helix" evidence="37">
    <location>
        <begin position="596"/>
        <end position="606"/>
    </location>
</feature>
<feature type="helix" evidence="37">
    <location>
        <begin position="609"/>
        <end position="611"/>
    </location>
</feature>
<feature type="strand" evidence="37">
    <location>
        <begin position="615"/>
        <end position="617"/>
    </location>
</feature>
<feature type="helix" evidence="37">
    <location>
        <begin position="621"/>
        <end position="638"/>
    </location>
</feature>
<feature type="turn" evidence="37">
    <location>
        <begin position="664"/>
        <end position="667"/>
    </location>
</feature>
<feature type="strand" evidence="37">
    <location>
        <begin position="672"/>
        <end position="674"/>
    </location>
</feature>
<feature type="turn" evidence="37">
    <location>
        <begin position="675"/>
        <end position="678"/>
    </location>
</feature>
<feature type="strand" evidence="37">
    <location>
        <begin position="679"/>
        <end position="681"/>
    </location>
</feature>
<keyword id="KW-0002">3D-structure</keyword>
<keyword id="KW-0007">Acetylation</keyword>
<keyword id="KW-0175">Coiled coil</keyword>
<keyword id="KW-0963">Cytoplasm</keyword>
<keyword id="KW-0221">Differentiation</keyword>
<keyword id="KW-1017">Isopeptide bond</keyword>
<keyword id="KW-0507">mRNA processing</keyword>
<keyword id="KW-0508">mRNA splicing</keyword>
<keyword id="KW-0509">mRNA transport</keyword>
<keyword id="KW-0539">Nucleus</keyword>
<keyword id="KW-0597">Phosphoprotein</keyword>
<keyword id="KW-1267">Proteomics identification</keyword>
<keyword id="KW-1185">Reference proteome</keyword>
<keyword id="KW-0694">RNA-binding</keyword>
<keyword id="KW-0813">Transport</keyword>
<keyword id="KW-0832">Ubl conjugation</keyword>
<organism>
    <name type="scientific">Homo sapiens</name>
    <name type="common">Human</name>
    <dbReference type="NCBI Taxonomy" id="9606"/>
    <lineage>
        <taxon>Eukaryota</taxon>
        <taxon>Metazoa</taxon>
        <taxon>Chordata</taxon>
        <taxon>Craniata</taxon>
        <taxon>Vertebrata</taxon>
        <taxon>Euteleostomi</taxon>
        <taxon>Mammalia</taxon>
        <taxon>Eutheria</taxon>
        <taxon>Euarchontoglires</taxon>
        <taxon>Primates</taxon>
        <taxon>Haplorrhini</taxon>
        <taxon>Catarrhini</taxon>
        <taxon>Hominidae</taxon>
        <taxon>Homo</taxon>
    </lineage>
</organism>
<evidence type="ECO:0000250" key="1"/>
<evidence type="ECO:0000250" key="2">
    <source>
        <dbReference type="UniProtKB" id="Q8BKT7"/>
    </source>
</evidence>
<evidence type="ECO:0000256" key="3">
    <source>
        <dbReference type="SAM" id="MobiDB-lite"/>
    </source>
</evidence>
<evidence type="ECO:0000269" key="4">
    <source>
    </source>
</evidence>
<evidence type="ECO:0000269" key="5">
    <source>
    </source>
</evidence>
<evidence type="ECO:0000269" key="6">
    <source>
    </source>
</evidence>
<evidence type="ECO:0000269" key="7">
    <source>
    </source>
</evidence>
<evidence type="ECO:0000269" key="8">
    <source>
    </source>
</evidence>
<evidence type="ECO:0000269" key="9">
    <source>
    </source>
</evidence>
<evidence type="ECO:0000269" key="10">
    <source>
    </source>
</evidence>
<evidence type="ECO:0000269" key="11">
    <source>
    </source>
</evidence>
<evidence type="ECO:0000269" key="12">
    <source>
    </source>
</evidence>
<evidence type="ECO:0000269" key="13">
    <source>
    </source>
</evidence>
<evidence type="ECO:0000269" key="14">
    <source>
    </source>
</evidence>
<evidence type="ECO:0000269" key="15">
    <source>
    </source>
</evidence>
<evidence type="ECO:0000269" key="16">
    <source>
    </source>
</evidence>
<evidence type="ECO:0000269" key="17">
    <source>
    </source>
</evidence>
<evidence type="ECO:0000269" key="18">
    <source>
    </source>
</evidence>
<evidence type="ECO:0000269" key="19">
    <source>
    </source>
</evidence>
<evidence type="ECO:0000269" key="20">
    <source>
    </source>
</evidence>
<evidence type="ECO:0000269" key="21">
    <source>
    </source>
</evidence>
<evidence type="ECO:0000269" key="22">
    <source>
    </source>
</evidence>
<evidence type="ECO:0000303" key="23">
    <source>
    </source>
</evidence>
<evidence type="ECO:0000305" key="24"/>
<evidence type="ECO:0007744" key="25">
    <source>
        <dbReference type="PDB" id="7APK"/>
    </source>
</evidence>
<evidence type="ECO:0007744" key="26">
    <source>
        <dbReference type="PDB" id="7ZNK"/>
    </source>
</evidence>
<evidence type="ECO:0007744" key="27">
    <source>
        <dbReference type="PDB" id="7ZNL"/>
    </source>
</evidence>
<evidence type="ECO:0007744" key="28">
    <source>
    </source>
</evidence>
<evidence type="ECO:0007744" key="29">
    <source>
    </source>
</evidence>
<evidence type="ECO:0007744" key="30">
    <source>
    </source>
</evidence>
<evidence type="ECO:0007744" key="31">
    <source>
    </source>
</evidence>
<evidence type="ECO:0007744" key="32">
    <source>
    </source>
</evidence>
<evidence type="ECO:0007744" key="33">
    <source>
    </source>
</evidence>
<evidence type="ECO:0007744" key="34">
    <source>
    </source>
</evidence>
<evidence type="ECO:0007744" key="35">
    <source>
    </source>
</evidence>
<evidence type="ECO:0007744" key="36">
    <source>
    </source>
</evidence>
<evidence type="ECO:0007829" key="37">
    <source>
        <dbReference type="PDB" id="7APK"/>
    </source>
</evidence>
<gene>
    <name type="primary">THOC5</name>
    <name type="synonym">C22orf19</name>
    <name type="synonym">KIAA0983</name>
</gene>
<comment type="function">
    <text evidence="7 8 10 12 17 20">Component of the THO subcomplex of the TREX complex which is thought to couple mRNA transcription, processing and nuclear export, and which specifically associates with spliced mRNA and not with unspliced pre-mRNA (PubMed:15833825, PubMed:15998806, PubMed:17190602). Plays a key structural role in the oligomerization of the THO-DDX39B complex (PubMed:33191911). TREX is recruited to spliced mRNAs by a transcription-independent mechanism, binds to mRNA upstream of the exon-junction complex (EJC) and is recruited in a splicing- and cap-dependent manner to a region near the 5' end of the mRNA where it functions in mRNA export to the cytoplasm via the TAP/NXF1 pathway (PubMed:15833825, PubMed:15998806, PubMed:17190602). THOC5 in conjunction with ALYREF/THOC4 functions in NXF1-NXT1 mediated nuclear export of HSP70 mRNA; both proteins enhance the RNA binding activity of NXF1 and are required for NXF1 localization to the nuclear rim. Involved in transcription elongation and genome stability (PubMed:18974867). Involved in alternative polyadenylation site choice by recruiting CPSF6 to 5' region of target genes; probably mediates association of the TREX and CFIm complexes (PubMed:23685434).</text>
</comment>
<comment type="function">
    <text evidence="2">Regulates the expression of myeloid transcription factors CEBPA, CEBPB and GAB2 by enhancing the levels of phosphatidylinositol 3,4,5-trisphosphate. May be involved in the differentiation of granulocytes and adipocytes. Essential for hematopoietic primitive cell survival and plays an integral role in monocytic development.</text>
</comment>
<comment type="function">
    <text evidence="12">(Microbial infection) The TREX complex is essential for the export of Kaposi's sarcoma-associated herpesvirus (KSHV) intronless mRNAs and infectious virus production.</text>
</comment>
<comment type="subunit">
    <text evidence="7 8 13 14 16 17 18 19 20 21">Component of the THO subcomplex, which is composed of THOC1, THOC2, THOC3, THOC5, THOC6 and THOC7 (PubMed:33191911, PubMed:37020021). The THO subcomplex interacts with DDX39B to form the THO-DDX39B complex which multimerizes into a 28-subunit tetrameric assembly (PubMed:33191911, PubMed:37020021). Component of the transcription/export (TREX) complex at least composed of ALYREF/THOC4, DDX39B, SARNP/CIP29, CHTOP and the THO subcomplex; in the complex interacts with THOC1, THOC2, THOC5, THOC6 and THOC7; forms a coiled-coil dimer with THOC7; together with THOC6 and THOC7, plays a key structural role in oligomerization of the THO-DDX39B complex (PubMed:33191911, PubMed:37020021). TREX seems to have a dynamic structure involving ATP-dependent remodeling (PubMed:19165146, PubMed:37020021). Interacts with phosphorylated CSF1R. Interacts (via N-terminus) with the NTF2 domain of NXF1. Forms a complex with CEBPB. Interacts with CPSF6; indicative for an association with the cleavage factor Im (CFIm) complex. Interacts with LUZP4. Interacts with NCBP3 (PubMed:26382858).</text>
</comment>
<comment type="interaction">
    <interactant intactId="EBI-5280316">
        <id>Q13769</id>
    </interactant>
    <interactant intactId="EBI-747259">
        <id>Q03518</id>
        <label>TAP1</label>
    </interactant>
    <organismsDiffer>false</organismsDiffer>
    <experiments>4</experiments>
</comment>
<comment type="interaction">
    <interactant intactId="EBI-5280316">
        <id>Q13769</id>
    </interactant>
    <interactant intactId="EBI-1765605">
        <id>Q96FV9</id>
        <label>THOC1</label>
    </interactant>
    <organismsDiffer>false</organismsDiffer>
    <experiments>12</experiments>
</comment>
<comment type="interaction">
    <interactant intactId="EBI-5280316">
        <id>Q13769</id>
    </interactant>
    <interactant intactId="EBI-716286">
        <id>Q6I9Y2</id>
        <label>THOC7</label>
    </interactant>
    <organismsDiffer>false</organismsDiffer>
    <experiments>9</experiments>
</comment>
<comment type="subcellular location">
    <subcellularLocation>
        <location evidence="13 14">Nucleus</location>
    </subcellularLocation>
    <subcellularLocation>
        <location evidence="13">Cytoplasm</location>
    </subcellularLocation>
    <text evidence="13">Shuttles between nucleus and cytoplasm.</text>
</comment>
<comment type="tissue specificity">
    <text>Ubiquitously expressed.</text>
</comment>
<comment type="PTM">
    <text evidence="1 11 15">Phosphorylated on tyrosine upon binding to activated CSF1R; which causes a dissociation of the two proteins. Phosphorylation on Ser-5 and/or Ser-6 is required for nuclear export. Phosphorylated on Thr-328 in insulin-stimulated adipocytes (By similarity). Phosphorylation at Tyr-225 modulates mRNA binding.</text>
</comment>
<comment type="similarity">
    <text evidence="24">Belongs to the THOC5 family.</text>
</comment>
<comment type="sequence caution" evidence="24">
    <conflict type="erroneous initiation">
        <sequence resource="EMBL-CDS" id="BAA76827"/>
    </conflict>
    <text>Extended N-terminus.</text>
</comment>